<gene>
    <name type="primary">PER66</name>
    <name type="synonym">P66</name>
    <name type="ordered locus">At5g51890</name>
    <name type="ORF">MJM18.4</name>
</gene>
<reference key="1">
    <citation type="journal article" date="2000" name="DNA Res.">
        <title>Structural analysis of Arabidopsis thaliana chromosome 5. X. Sequence features of the regions of 3,076,755 bp covered by sixty P1 and TAC clones.</title>
        <authorList>
            <person name="Sato S."/>
            <person name="Nakamura Y."/>
            <person name="Kaneko T."/>
            <person name="Katoh T."/>
            <person name="Asamizu E."/>
            <person name="Kotani H."/>
            <person name="Tabata S."/>
        </authorList>
    </citation>
    <scope>NUCLEOTIDE SEQUENCE [LARGE SCALE GENOMIC DNA]</scope>
    <source>
        <strain>cv. Columbia</strain>
    </source>
</reference>
<reference key="2">
    <citation type="journal article" date="2017" name="Plant J.">
        <title>Araport11: a complete reannotation of the Arabidopsis thaliana reference genome.</title>
        <authorList>
            <person name="Cheng C.Y."/>
            <person name="Krishnakumar V."/>
            <person name="Chan A.P."/>
            <person name="Thibaud-Nissen F."/>
            <person name="Schobel S."/>
            <person name="Town C.D."/>
        </authorList>
    </citation>
    <scope>GENOME REANNOTATION</scope>
    <source>
        <strain>cv. Columbia</strain>
    </source>
</reference>
<reference key="3">
    <citation type="journal article" date="2003" name="Science">
        <title>Empirical analysis of transcriptional activity in the Arabidopsis genome.</title>
        <authorList>
            <person name="Yamada K."/>
            <person name="Lim J."/>
            <person name="Dale J.M."/>
            <person name="Chen H."/>
            <person name="Shinn P."/>
            <person name="Palm C.J."/>
            <person name="Southwick A.M."/>
            <person name="Wu H.C."/>
            <person name="Kim C.J."/>
            <person name="Nguyen M."/>
            <person name="Pham P.K."/>
            <person name="Cheuk R.F."/>
            <person name="Karlin-Newmann G."/>
            <person name="Liu S.X."/>
            <person name="Lam B."/>
            <person name="Sakano H."/>
            <person name="Wu T."/>
            <person name="Yu G."/>
            <person name="Miranda M."/>
            <person name="Quach H.L."/>
            <person name="Tripp M."/>
            <person name="Chang C.H."/>
            <person name="Lee J.M."/>
            <person name="Toriumi M.J."/>
            <person name="Chan M.M."/>
            <person name="Tang C.C."/>
            <person name="Onodera C.S."/>
            <person name="Deng J.M."/>
            <person name="Akiyama K."/>
            <person name="Ansari Y."/>
            <person name="Arakawa T."/>
            <person name="Banh J."/>
            <person name="Banno F."/>
            <person name="Bowser L."/>
            <person name="Brooks S.Y."/>
            <person name="Carninci P."/>
            <person name="Chao Q."/>
            <person name="Choy N."/>
            <person name="Enju A."/>
            <person name="Goldsmith A.D."/>
            <person name="Gurjal M."/>
            <person name="Hansen N.F."/>
            <person name="Hayashizaki Y."/>
            <person name="Johnson-Hopson C."/>
            <person name="Hsuan V.W."/>
            <person name="Iida K."/>
            <person name="Karnes M."/>
            <person name="Khan S."/>
            <person name="Koesema E."/>
            <person name="Ishida J."/>
            <person name="Jiang P.X."/>
            <person name="Jones T."/>
            <person name="Kawai J."/>
            <person name="Kamiya A."/>
            <person name="Meyers C."/>
            <person name="Nakajima M."/>
            <person name="Narusaka M."/>
            <person name="Seki M."/>
            <person name="Sakurai T."/>
            <person name="Satou M."/>
            <person name="Tamse R."/>
            <person name="Vaysberg M."/>
            <person name="Wallender E.K."/>
            <person name="Wong C."/>
            <person name="Yamamura Y."/>
            <person name="Yuan S."/>
            <person name="Shinozaki K."/>
            <person name="Davis R.W."/>
            <person name="Theologis A."/>
            <person name="Ecker J.R."/>
        </authorList>
    </citation>
    <scope>NUCLEOTIDE SEQUENCE [LARGE SCALE MRNA]</scope>
    <source>
        <strain>cv. Columbia</strain>
    </source>
</reference>
<reference key="4">
    <citation type="submission" date="1997-03" db="EMBL/GenBank/DDBJ databases">
        <title>From expressed sequence tags to structure, function, evolution and expression of 28 ER-targeted Arabidopsis peroxidases.</title>
        <authorList>
            <person name="Welinder K.G."/>
            <person name="Jespersen H.M."/>
            <person name="Kjaersgaard I.V.H."/>
            <person name="Justesen A.F."/>
            <person name="Oestergaard L."/>
            <person name="Abelskov A.K."/>
            <person name="Jensen R.B."/>
            <person name="Hansen L.N."/>
            <person name="Rasmussen S.K."/>
        </authorList>
    </citation>
    <scope>NUCLEOTIDE SEQUENCE [MRNA] OF 119-322</scope>
    <source>
        <strain>cv. Columbia</strain>
    </source>
</reference>
<reference key="5">
    <citation type="journal article" date="2002" name="Gene">
        <title>Analysis and expression of the class III peroxidase large gene family in Arabidopsis thaliana.</title>
        <authorList>
            <person name="Tognolli M."/>
            <person name="Penel C."/>
            <person name="Greppin H."/>
            <person name="Simon P."/>
        </authorList>
    </citation>
    <scope>GENE FAMILY ORGANIZATION</scope>
    <scope>NOMENCLATURE</scope>
    <source>
        <strain>cv. Columbia</strain>
    </source>
</reference>
<comment type="function">
    <text>Removal of H(2)O(2), oxidation of toxic reductants, biosynthesis and degradation of lignin, suberization, auxin catabolism, response to environmental stresses such as wounding, pathogen attack and oxidative stress. These functions might be dependent on each isozyme/isoform in each plant tissue.</text>
</comment>
<comment type="catalytic activity">
    <reaction>
        <text>2 a phenolic donor + H2O2 = 2 a phenolic radical donor + 2 H2O</text>
        <dbReference type="Rhea" id="RHEA:56136"/>
        <dbReference type="ChEBI" id="CHEBI:15377"/>
        <dbReference type="ChEBI" id="CHEBI:16240"/>
        <dbReference type="ChEBI" id="CHEBI:139520"/>
        <dbReference type="ChEBI" id="CHEBI:139521"/>
        <dbReference type="EC" id="1.11.1.7"/>
    </reaction>
</comment>
<comment type="cofactor">
    <cofactor evidence="2">
        <name>heme b</name>
        <dbReference type="ChEBI" id="CHEBI:60344"/>
    </cofactor>
    <text evidence="2">Binds 1 heme b (iron(II)-protoporphyrin IX) group per subunit.</text>
</comment>
<comment type="cofactor">
    <cofactor evidence="2">
        <name>Ca(2+)</name>
        <dbReference type="ChEBI" id="CHEBI:29108"/>
    </cofactor>
    <text evidence="2">Binds 2 calcium ions per subunit.</text>
</comment>
<comment type="subcellular location">
    <subcellularLocation>
        <location evidence="2">Secreted</location>
    </subcellularLocation>
</comment>
<comment type="miscellaneous">
    <text>There are 73 peroxidase genes in A.thaliana.</text>
</comment>
<comment type="similarity">
    <text evidence="2">Belongs to the peroxidase family. Classical plant (class III) peroxidase subfamily.</text>
</comment>
<comment type="caution">
    <text evidence="3">Lacks one of the disulfide bridges highly conserved in the class III peroxidase family.</text>
</comment>
<name>PER66_ARATH</name>
<protein>
    <recommendedName>
        <fullName>Peroxidase 66</fullName>
        <shortName>Atperox P66</shortName>
        <ecNumber>1.11.1.7</ecNumber>
    </recommendedName>
    <alternativeName>
        <fullName>ATP27a</fullName>
    </alternativeName>
</protein>
<proteinExistence type="evidence at transcript level"/>
<accession>Q9LT91</accession>
<accession>P93727</accession>
<feature type="signal peptide" evidence="1">
    <location>
        <begin position="1"/>
        <end position="24"/>
    </location>
</feature>
<feature type="chain" id="PRO_0000023731" description="Peroxidase 66">
    <location>
        <begin position="25"/>
        <end position="322"/>
    </location>
</feature>
<feature type="active site" description="Proton acceptor" evidence="2">
    <location>
        <position position="66"/>
    </location>
</feature>
<feature type="binding site" evidence="2">
    <location>
        <position position="67"/>
    </location>
    <ligand>
        <name>Ca(2+)</name>
        <dbReference type="ChEBI" id="CHEBI:29108"/>
        <label>1</label>
    </ligand>
</feature>
<feature type="binding site" evidence="2">
    <location>
        <position position="72"/>
    </location>
    <ligand>
        <name>Ca(2+)</name>
        <dbReference type="ChEBI" id="CHEBI:29108"/>
        <label>1</label>
    </ligand>
</feature>
<feature type="binding site" evidence="2">
    <location>
        <position position="74"/>
    </location>
    <ligand>
        <name>Ca(2+)</name>
        <dbReference type="ChEBI" id="CHEBI:29108"/>
        <label>1</label>
    </ligand>
</feature>
<feature type="binding site" evidence="2">
    <location>
        <position position="76"/>
    </location>
    <ligand>
        <name>Ca(2+)</name>
        <dbReference type="ChEBI" id="CHEBI:29108"/>
        <label>1</label>
    </ligand>
</feature>
<feature type="binding site" evidence="2">
    <location>
        <position position="161"/>
    </location>
    <ligand>
        <name>substrate</name>
    </ligand>
</feature>
<feature type="binding site" description="axial binding residue" evidence="2">
    <location>
        <position position="191"/>
    </location>
    <ligand>
        <name>heme b</name>
        <dbReference type="ChEBI" id="CHEBI:60344"/>
    </ligand>
    <ligandPart>
        <name>Fe</name>
        <dbReference type="ChEBI" id="CHEBI:18248"/>
    </ligandPart>
</feature>
<feature type="binding site" evidence="2">
    <location>
        <position position="192"/>
    </location>
    <ligand>
        <name>Ca(2+)</name>
        <dbReference type="ChEBI" id="CHEBI:29108"/>
        <label>2</label>
    </ligand>
</feature>
<feature type="binding site" evidence="2">
    <location>
        <position position="245"/>
    </location>
    <ligand>
        <name>Ca(2+)</name>
        <dbReference type="ChEBI" id="CHEBI:29108"/>
        <label>2</label>
    </ligand>
</feature>
<feature type="binding site" evidence="2">
    <location>
        <position position="247"/>
    </location>
    <ligand>
        <name>Ca(2+)</name>
        <dbReference type="ChEBI" id="CHEBI:29108"/>
        <label>2</label>
    </ligand>
</feature>
<feature type="binding site" evidence="2">
    <location>
        <position position="252"/>
    </location>
    <ligand>
        <name>Ca(2+)</name>
        <dbReference type="ChEBI" id="CHEBI:29108"/>
        <label>2</label>
    </ligand>
</feature>
<feature type="site" description="Transition state stabilizer" evidence="2">
    <location>
        <position position="62"/>
    </location>
</feature>
<feature type="glycosylation site" description="N-linked (GlcNAc...) asparagine" evidence="1">
    <location>
        <position position="155"/>
    </location>
</feature>
<feature type="glycosylation site" description="N-linked (GlcNAc...) asparagine" evidence="1">
    <location>
        <position position="166"/>
    </location>
</feature>
<feature type="glycosylation site" description="N-linked (GlcNAc...) asparagine" evidence="1">
    <location>
        <position position="207"/>
    </location>
</feature>
<feature type="disulfide bond" evidence="2">
    <location>
        <begin position="35"/>
        <end position="114"/>
    </location>
</feature>
<feature type="disulfide bond" evidence="2">
    <location>
        <begin position="68"/>
        <end position="73"/>
    </location>
</feature>
<feature type="disulfide bond" evidence="2">
    <location>
        <begin position="198"/>
        <end position="230"/>
    </location>
</feature>
<sequence>MAFSKGLIFAMIFAVLAIVKPSEAALDAHYYDQSCPAAEKIILETVRNATLYDPKVPARLLRMFFHDCFIRGCDASILLDSTRSNQAEKDGPPNISVRSFYVIEDAKRKLEKACPRTVSCADVIAIAARDVVTLSGGPYWSVLKGRKDGTISRANETRNLPPPTFNVSQLIQSFAARGLSVKDMVTLSGGHTIGFSHCSSFESRLQNFSKFHDIDPSMNYAFAQTLKKKCPRTSNRGKNAGTVLDSTSSVFDNVYYKQILSGKGVFGSDQALLGDSRTKWIVETFAQDQKAFFREFAASMVKLGNFGVKETGQVRVNTRFVN</sequence>
<evidence type="ECO:0000255" key="1"/>
<evidence type="ECO:0000255" key="2">
    <source>
        <dbReference type="PROSITE-ProRule" id="PRU00297"/>
    </source>
</evidence>
<evidence type="ECO:0000305" key="3"/>
<dbReference type="EC" id="1.11.1.7"/>
<dbReference type="EMBL" id="AB025623">
    <property type="protein sequence ID" value="BAA97224.1"/>
    <property type="molecule type" value="Genomic_DNA"/>
</dbReference>
<dbReference type="EMBL" id="CP002688">
    <property type="protein sequence ID" value="AED96142.1"/>
    <property type="molecule type" value="Genomic_DNA"/>
</dbReference>
<dbReference type="EMBL" id="AY072121">
    <property type="protein sequence ID" value="AAL59943.1"/>
    <property type="molecule type" value="mRNA"/>
</dbReference>
<dbReference type="EMBL" id="AY122968">
    <property type="protein sequence ID" value="AAM67501.1"/>
    <property type="molecule type" value="mRNA"/>
</dbReference>
<dbReference type="EMBL" id="Y11792">
    <property type="protein sequence ID" value="CAA72488.1"/>
    <property type="molecule type" value="mRNA"/>
</dbReference>
<dbReference type="RefSeq" id="NP_200002.3">
    <property type="nucleotide sequence ID" value="NM_124568.6"/>
</dbReference>
<dbReference type="SMR" id="Q9LT91"/>
<dbReference type="BioGRID" id="20509">
    <property type="interactions" value="1"/>
</dbReference>
<dbReference type="FunCoup" id="Q9LT91">
    <property type="interactions" value="130"/>
</dbReference>
<dbReference type="STRING" id="3702.Q9LT91"/>
<dbReference type="PeroxiBase" id="232">
    <property type="entry name" value="AtPrx66"/>
</dbReference>
<dbReference type="GlyCosmos" id="Q9LT91">
    <property type="glycosylation" value="3 sites, No reported glycans"/>
</dbReference>
<dbReference type="GlyGen" id="Q9LT91">
    <property type="glycosylation" value="3 sites"/>
</dbReference>
<dbReference type="PaxDb" id="3702-AT5G51890.1"/>
<dbReference type="ProteomicsDB" id="236392"/>
<dbReference type="EnsemblPlants" id="AT5G51890.1">
    <property type="protein sequence ID" value="AT5G51890.1"/>
    <property type="gene ID" value="AT5G51890"/>
</dbReference>
<dbReference type="GeneID" id="835264"/>
<dbReference type="Gramene" id="AT5G51890.1">
    <property type="protein sequence ID" value="AT5G51890.1"/>
    <property type="gene ID" value="AT5G51890"/>
</dbReference>
<dbReference type="KEGG" id="ath:AT5G51890"/>
<dbReference type="Araport" id="AT5G51890"/>
<dbReference type="TAIR" id="AT5G51890">
    <property type="gene designation" value="PRX66"/>
</dbReference>
<dbReference type="eggNOG" id="ENOG502QVMI">
    <property type="taxonomic scope" value="Eukaryota"/>
</dbReference>
<dbReference type="HOGENOM" id="CLU_010543_0_3_1"/>
<dbReference type="InParanoid" id="Q9LT91"/>
<dbReference type="OMA" id="RNASMHD"/>
<dbReference type="OrthoDB" id="2113341at2759"/>
<dbReference type="PhylomeDB" id="Q9LT91"/>
<dbReference type="BioCyc" id="ARA:AT5G51890-MONOMER"/>
<dbReference type="PRO" id="PR:Q9LT91"/>
<dbReference type="Proteomes" id="UP000006548">
    <property type="component" value="Chromosome 5"/>
</dbReference>
<dbReference type="ExpressionAtlas" id="Q9LT91">
    <property type="expression patterns" value="baseline and differential"/>
</dbReference>
<dbReference type="GO" id="GO:0005576">
    <property type="term" value="C:extracellular region"/>
    <property type="evidence" value="ECO:0007669"/>
    <property type="project" value="UniProtKB-SubCell"/>
</dbReference>
<dbReference type="GO" id="GO:0020037">
    <property type="term" value="F:heme binding"/>
    <property type="evidence" value="ECO:0007669"/>
    <property type="project" value="InterPro"/>
</dbReference>
<dbReference type="GO" id="GO:0140825">
    <property type="term" value="F:lactoperoxidase activity"/>
    <property type="evidence" value="ECO:0007669"/>
    <property type="project" value="UniProtKB-EC"/>
</dbReference>
<dbReference type="GO" id="GO:0046872">
    <property type="term" value="F:metal ion binding"/>
    <property type="evidence" value="ECO:0007669"/>
    <property type="project" value="UniProtKB-KW"/>
</dbReference>
<dbReference type="GO" id="GO:0004601">
    <property type="term" value="F:peroxidase activity"/>
    <property type="evidence" value="ECO:0000304"/>
    <property type="project" value="TAIR"/>
</dbReference>
<dbReference type="GO" id="GO:0042744">
    <property type="term" value="P:hydrogen peroxide catabolic process"/>
    <property type="evidence" value="ECO:0007669"/>
    <property type="project" value="UniProtKB-KW"/>
</dbReference>
<dbReference type="GO" id="GO:0006979">
    <property type="term" value="P:response to oxidative stress"/>
    <property type="evidence" value="ECO:0007669"/>
    <property type="project" value="InterPro"/>
</dbReference>
<dbReference type="CDD" id="cd00693">
    <property type="entry name" value="secretory_peroxidase"/>
    <property type="match status" value="1"/>
</dbReference>
<dbReference type="FunFam" id="1.10.420.10:FF:000006">
    <property type="entry name" value="Peroxidase"/>
    <property type="match status" value="1"/>
</dbReference>
<dbReference type="FunFam" id="1.10.520.10:FF:000001">
    <property type="entry name" value="Peroxidase"/>
    <property type="match status" value="1"/>
</dbReference>
<dbReference type="Gene3D" id="1.10.520.10">
    <property type="match status" value="1"/>
</dbReference>
<dbReference type="Gene3D" id="1.10.420.10">
    <property type="entry name" value="Peroxidase, domain 2"/>
    <property type="match status" value="1"/>
</dbReference>
<dbReference type="InterPro" id="IPR002016">
    <property type="entry name" value="Haem_peroxidase"/>
</dbReference>
<dbReference type="InterPro" id="IPR010255">
    <property type="entry name" value="Haem_peroxidase_sf"/>
</dbReference>
<dbReference type="InterPro" id="IPR000823">
    <property type="entry name" value="Peroxidase_pln"/>
</dbReference>
<dbReference type="InterPro" id="IPR019793">
    <property type="entry name" value="Peroxidases_heam-ligand_BS"/>
</dbReference>
<dbReference type="InterPro" id="IPR033905">
    <property type="entry name" value="Secretory_peroxidase"/>
</dbReference>
<dbReference type="PANTHER" id="PTHR31235">
    <property type="entry name" value="PEROXIDASE 25-RELATED"/>
    <property type="match status" value="1"/>
</dbReference>
<dbReference type="Pfam" id="PF00141">
    <property type="entry name" value="peroxidase"/>
    <property type="match status" value="1"/>
</dbReference>
<dbReference type="PRINTS" id="PR00458">
    <property type="entry name" value="PEROXIDASE"/>
</dbReference>
<dbReference type="PRINTS" id="PR00461">
    <property type="entry name" value="PLPEROXIDASE"/>
</dbReference>
<dbReference type="SUPFAM" id="SSF48113">
    <property type="entry name" value="Heme-dependent peroxidases"/>
    <property type="match status" value="1"/>
</dbReference>
<dbReference type="PROSITE" id="PS00435">
    <property type="entry name" value="PEROXIDASE_1"/>
    <property type="match status" value="1"/>
</dbReference>
<dbReference type="PROSITE" id="PS50873">
    <property type="entry name" value="PEROXIDASE_4"/>
    <property type="match status" value="1"/>
</dbReference>
<organism>
    <name type="scientific">Arabidopsis thaliana</name>
    <name type="common">Mouse-ear cress</name>
    <dbReference type="NCBI Taxonomy" id="3702"/>
    <lineage>
        <taxon>Eukaryota</taxon>
        <taxon>Viridiplantae</taxon>
        <taxon>Streptophyta</taxon>
        <taxon>Embryophyta</taxon>
        <taxon>Tracheophyta</taxon>
        <taxon>Spermatophyta</taxon>
        <taxon>Magnoliopsida</taxon>
        <taxon>eudicotyledons</taxon>
        <taxon>Gunneridae</taxon>
        <taxon>Pentapetalae</taxon>
        <taxon>rosids</taxon>
        <taxon>malvids</taxon>
        <taxon>Brassicales</taxon>
        <taxon>Brassicaceae</taxon>
        <taxon>Camelineae</taxon>
        <taxon>Arabidopsis</taxon>
    </lineage>
</organism>
<keyword id="KW-0106">Calcium</keyword>
<keyword id="KW-1015">Disulfide bond</keyword>
<keyword id="KW-0325">Glycoprotein</keyword>
<keyword id="KW-0349">Heme</keyword>
<keyword id="KW-0376">Hydrogen peroxide</keyword>
<keyword id="KW-0408">Iron</keyword>
<keyword id="KW-0479">Metal-binding</keyword>
<keyword id="KW-0560">Oxidoreductase</keyword>
<keyword id="KW-0575">Peroxidase</keyword>
<keyword id="KW-1185">Reference proteome</keyword>
<keyword id="KW-0964">Secreted</keyword>
<keyword id="KW-0732">Signal</keyword>